<feature type="chain" id="PRO_0000327520" description="Uricase">
    <location>
        <begin position="1"/>
        <end position="287"/>
    </location>
</feature>
<feature type="short sequence motif" description="Microbody targeting signal" evidence="4">
    <location>
        <begin position="285"/>
        <end position="287"/>
    </location>
</feature>
<feature type="active site" description="Charge relay system" evidence="2">
    <location>
        <position position="11"/>
    </location>
</feature>
<feature type="active site" description="Charge relay system" evidence="2">
    <location>
        <position position="58"/>
    </location>
</feature>
<feature type="active site" description="Charge relay system" evidence="2">
    <location>
        <position position="248"/>
    </location>
</feature>
<feature type="binding site" evidence="3">
    <location>
        <position position="58"/>
    </location>
    <ligand>
        <name>urate</name>
        <dbReference type="ChEBI" id="CHEBI:17775"/>
    </ligand>
</feature>
<feature type="binding site" evidence="3">
    <location>
        <position position="59"/>
    </location>
    <ligand>
        <name>urate</name>
        <dbReference type="ChEBI" id="CHEBI:17775"/>
    </ligand>
</feature>
<feature type="binding site" evidence="3">
    <location>
        <position position="160"/>
    </location>
    <ligand>
        <name>urate</name>
        <dbReference type="ChEBI" id="CHEBI:17775"/>
    </ligand>
</feature>
<feature type="binding site" evidence="3">
    <location>
        <position position="177"/>
    </location>
    <ligand>
        <name>urate</name>
        <dbReference type="ChEBI" id="CHEBI:17775"/>
    </ligand>
</feature>
<feature type="binding site" evidence="3">
    <location>
        <position position="219"/>
    </location>
    <ligand>
        <name>urate</name>
        <dbReference type="ChEBI" id="CHEBI:17775"/>
    </ligand>
</feature>
<feature type="binding site" evidence="3">
    <location>
        <position position="220"/>
    </location>
    <ligand>
        <name>urate</name>
        <dbReference type="ChEBI" id="CHEBI:17775"/>
    </ligand>
</feature>
<feature type="binding site" evidence="3">
    <location>
        <position position="246"/>
    </location>
    <ligand>
        <name>urate</name>
        <dbReference type="ChEBI" id="CHEBI:17775"/>
    </ligand>
</feature>
<organism>
    <name type="scientific">Dictyostelium discoideum</name>
    <name type="common">Social amoeba</name>
    <dbReference type="NCBI Taxonomy" id="44689"/>
    <lineage>
        <taxon>Eukaryota</taxon>
        <taxon>Amoebozoa</taxon>
        <taxon>Evosea</taxon>
        <taxon>Eumycetozoa</taxon>
        <taxon>Dictyostelia</taxon>
        <taxon>Dictyosteliales</taxon>
        <taxon>Dictyosteliaceae</taxon>
        <taxon>Dictyostelium</taxon>
    </lineage>
</organism>
<protein>
    <recommendedName>
        <fullName>Uricase</fullName>
        <ecNumber>1.7.3.3</ecNumber>
    </recommendedName>
    <alternativeName>
        <fullName>Urate oxidase</fullName>
    </alternativeName>
</protein>
<reference key="1">
    <citation type="journal article" date="2005" name="Nature">
        <title>The genome of the social amoeba Dictyostelium discoideum.</title>
        <authorList>
            <person name="Eichinger L."/>
            <person name="Pachebat J.A."/>
            <person name="Gloeckner G."/>
            <person name="Rajandream M.A."/>
            <person name="Sucgang R."/>
            <person name="Berriman M."/>
            <person name="Song J."/>
            <person name="Olsen R."/>
            <person name="Szafranski K."/>
            <person name="Xu Q."/>
            <person name="Tunggal B."/>
            <person name="Kummerfeld S."/>
            <person name="Madera M."/>
            <person name="Konfortov B.A."/>
            <person name="Rivero F."/>
            <person name="Bankier A.T."/>
            <person name="Lehmann R."/>
            <person name="Hamlin N."/>
            <person name="Davies R."/>
            <person name="Gaudet P."/>
            <person name="Fey P."/>
            <person name="Pilcher K."/>
            <person name="Chen G."/>
            <person name="Saunders D."/>
            <person name="Sodergren E.J."/>
            <person name="Davis P."/>
            <person name="Kerhornou A."/>
            <person name="Nie X."/>
            <person name="Hall N."/>
            <person name="Anjard C."/>
            <person name="Hemphill L."/>
            <person name="Bason N."/>
            <person name="Farbrother P."/>
            <person name="Desany B."/>
            <person name="Just E."/>
            <person name="Morio T."/>
            <person name="Rost R."/>
            <person name="Churcher C.M."/>
            <person name="Cooper J."/>
            <person name="Haydock S."/>
            <person name="van Driessche N."/>
            <person name="Cronin A."/>
            <person name="Goodhead I."/>
            <person name="Muzny D.M."/>
            <person name="Mourier T."/>
            <person name="Pain A."/>
            <person name="Lu M."/>
            <person name="Harper D."/>
            <person name="Lindsay R."/>
            <person name="Hauser H."/>
            <person name="James K.D."/>
            <person name="Quiles M."/>
            <person name="Madan Babu M."/>
            <person name="Saito T."/>
            <person name="Buchrieser C."/>
            <person name="Wardroper A."/>
            <person name="Felder M."/>
            <person name="Thangavelu M."/>
            <person name="Johnson D."/>
            <person name="Knights A."/>
            <person name="Loulseged H."/>
            <person name="Mungall K.L."/>
            <person name="Oliver K."/>
            <person name="Price C."/>
            <person name="Quail M.A."/>
            <person name="Urushihara H."/>
            <person name="Hernandez J."/>
            <person name="Rabbinowitsch E."/>
            <person name="Steffen D."/>
            <person name="Sanders M."/>
            <person name="Ma J."/>
            <person name="Kohara Y."/>
            <person name="Sharp S."/>
            <person name="Simmonds M.N."/>
            <person name="Spiegler S."/>
            <person name="Tivey A."/>
            <person name="Sugano S."/>
            <person name="White B."/>
            <person name="Walker D."/>
            <person name="Woodward J.R."/>
            <person name="Winckler T."/>
            <person name="Tanaka Y."/>
            <person name="Shaulsky G."/>
            <person name="Schleicher M."/>
            <person name="Weinstock G.M."/>
            <person name="Rosenthal A."/>
            <person name="Cox E.C."/>
            <person name="Chisholm R.L."/>
            <person name="Gibbs R.A."/>
            <person name="Loomis W.F."/>
            <person name="Platzer M."/>
            <person name="Kay R.R."/>
            <person name="Williams J.G."/>
            <person name="Dear P.H."/>
            <person name="Noegel A.A."/>
            <person name="Barrell B.G."/>
            <person name="Kuspa A."/>
        </authorList>
    </citation>
    <scope>NUCLEOTIDE SEQUENCE [LARGE SCALE GENOMIC DNA]</scope>
    <source>
        <strain>AX4</strain>
    </source>
</reference>
<evidence type="ECO:0000250" key="1"/>
<evidence type="ECO:0000250" key="2">
    <source>
        <dbReference type="UniProtKB" id="D0VWQ1"/>
    </source>
</evidence>
<evidence type="ECO:0000250" key="3">
    <source>
        <dbReference type="UniProtKB" id="Q00511"/>
    </source>
</evidence>
<evidence type="ECO:0000255" key="4"/>
<evidence type="ECO:0000305" key="5"/>
<gene>
    <name type="primary">uox</name>
    <name type="ORF">DDB_G0286427</name>
</gene>
<keyword id="KW-0560">Oxidoreductase</keyword>
<keyword id="KW-0576">Peroxisome</keyword>
<keyword id="KW-0659">Purine metabolism</keyword>
<keyword id="KW-1185">Reference proteome</keyword>
<dbReference type="EC" id="1.7.3.3"/>
<dbReference type="EMBL" id="AAFI02000085">
    <property type="protein sequence ID" value="EAL64238.1"/>
    <property type="molecule type" value="Genomic_DNA"/>
</dbReference>
<dbReference type="RefSeq" id="XP_637748.1">
    <property type="nucleotide sequence ID" value="XM_632656.1"/>
</dbReference>
<dbReference type="SMR" id="Q54LT2"/>
<dbReference type="FunCoup" id="Q54LT2">
    <property type="interactions" value="131"/>
</dbReference>
<dbReference type="STRING" id="44689.Q54LT2"/>
<dbReference type="PaxDb" id="44689-DDB0231470"/>
<dbReference type="EnsemblProtists" id="EAL64238">
    <property type="protein sequence ID" value="EAL64238"/>
    <property type="gene ID" value="DDB_G0286427"/>
</dbReference>
<dbReference type="GeneID" id="8625614"/>
<dbReference type="KEGG" id="ddi:DDB_G0286427"/>
<dbReference type="dictyBase" id="DDB_G0286427">
    <property type="gene designation" value="uox"/>
</dbReference>
<dbReference type="VEuPathDB" id="AmoebaDB:DDB_G0286427"/>
<dbReference type="eggNOG" id="KOG1599">
    <property type="taxonomic scope" value="Eukaryota"/>
</dbReference>
<dbReference type="HOGENOM" id="CLU_048151_0_0_1"/>
<dbReference type="InParanoid" id="Q54LT2"/>
<dbReference type="OMA" id="ATMYKMS"/>
<dbReference type="PhylomeDB" id="Q54LT2"/>
<dbReference type="UniPathway" id="UPA00394">
    <property type="reaction ID" value="UER00650"/>
</dbReference>
<dbReference type="PRO" id="PR:Q54LT2"/>
<dbReference type="Proteomes" id="UP000002195">
    <property type="component" value="Chromosome 4"/>
</dbReference>
<dbReference type="GO" id="GO:0005777">
    <property type="term" value="C:peroxisome"/>
    <property type="evidence" value="ECO:0000318"/>
    <property type="project" value="GO_Central"/>
</dbReference>
<dbReference type="GO" id="GO:0045335">
    <property type="term" value="C:phagocytic vesicle"/>
    <property type="evidence" value="ECO:0007005"/>
    <property type="project" value="dictyBase"/>
</dbReference>
<dbReference type="GO" id="GO:0004846">
    <property type="term" value="F:urate oxidase activity"/>
    <property type="evidence" value="ECO:0000318"/>
    <property type="project" value="GO_Central"/>
</dbReference>
<dbReference type="GO" id="GO:0006145">
    <property type="term" value="P:purine nucleobase catabolic process"/>
    <property type="evidence" value="ECO:0000318"/>
    <property type="project" value="GO_Central"/>
</dbReference>
<dbReference type="GO" id="GO:0019628">
    <property type="term" value="P:urate catabolic process"/>
    <property type="evidence" value="ECO:0000318"/>
    <property type="project" value="GO_Central"/>
</dbReference>
<dbReference type="Gene3D" id="3.10.270.10">
    <property type="entry name" value="Urate Oxidase"/>
    <property type="match status" value="1"/>
</dbReference>
<dbReference type="InterPro" id="IPR002042">
    <property type="entry name" value="Uricase"/>
</dbReference>
<dbReference type="NCBIfam" id="TIGR03383">
    <property type="entry name" value="urate_oxi"/>
    <property type="match status" value="1"/>
</dbReference>
<dbReference type="PANTHER" id="PTHR42874">
    <property type="entry name" value="URICASE"/>
    <property type="match status" value="1"/>
</dbReference>
<dbReference type="PANTHER" id="PTHR42874:SF1">
    <property type="entry name" value="URICASE"/>
    <property type="match status" value="1"/>
</dbReference>
<dbReference type="Pfam" id="PF01014">
    <property type="entry name" value="Uricase"/>
    <property type="match status" value="2"/>
</dbReference>
<dbReference type="PIRSF" id="PIRSF000241">
    <property type="entry name" value="Urate_oxidase"/>
    <property type="match status" value="1"/>
</dbReference>
<dbReference type="PRINTS" id="PR00093">
    <property type="entry name" value="URICASE"/>
</dbReference>
<dbReference type="SUPFAM" id="SSF55620">
    <property type="entry name" value="Tetrahydrobiopterin biosynthesis enzymes-like"/>
    <property type="match status" value="2"/>
</dbReference>
<accession>Q54LT2</accession>
<name>URIC_DICDI</name>
<proteinExistence type="inferred from homology"/>
<sequence length="287" mass="33031">MATLIDNRYGKARVRVLRVFKGPNEYHKVFDFDCRVLLRGAEFSETYLTGDNSKVVATDTMKNTVYVIAQKEEFKSLEEYGILLGKHFLATYSWVNGVEVVMRENQWRRIKTSNGKEQAHSFQRDREIHSVTVTSSRDKSPVVVSGIDDLLIMKTTQSGFEGFHRDKYTSLKETKDRVFATVVTANWTYNTLSVDYSKVFEQFKLSVFDIFAQTYSRSVQETLFLIAKDVISKVPQVEQVHLSLPNKHAFGFDFSRLNIENNQTVFQPVEEPSGLIEGTIKRSHSRL</sequence>
<comment type="function">
    <text evidence="1">Catalyzes the oxidation of uric acid to 5-hydroxyisourate, which is further processed to form (S)-allantoin.</text>
</comment>
<comment type="catalytic activity">
    <reaction>
        <text>urate + O2 + H2O = 5-hydroxyisourate + H2O2</text>
        <dbReference type="Rhea" id="RHEA:21368"/>
        <dbReference type="ChEBI" id="CHEBI:15377"/>
        <dbReference type="ChEBI" id="CHEBI:15379"/>
        <dbReference type="ChEBI" id="CHEBI:16240"/>
        <dbReference type="ChEBI" id="CHEBI:17775"/>
        <dbReference type="ChEBI" id="CHEBI:18072"/>
        <dbReference type="EC" id="1.7.3.3"/>
    </reaction>
</comment>
<comment type="pathway">
    <text>Purine metabolism; urate degradation; (S)-allantoin from urate: step 1/3.</text>
</comment>
<comment type="subcellular location">
    <subcellularLocation>
        <location evidence="1">Peroxisome</location>
    </subcellularLocation>
</comment>
<comment type="similarity">
    <text evidence="5">Belongs to the uricase family.</text>
</comment>